<dbReference type="EMBL" id="X51344">
    <property type="protein sequence ID" value="CAA35733.1"/>
    <property type="molecule type" value="Genomic_DNA"/>
</dbReference>
<dbReference type="RefSeq" id="NP_040345.1">
    <property type="nucleotide sequence ID" value="NC_001365.1"/>
</dbReference>
<dbReference type="SMR" id="P15897"/>
<dbReference type="KEGG" id="vg:1260866"/>
<dbReference type="Proteomes" id="UP000001252">
    <property type="component" value="Segment"/>
</dbReference>
<dbReference type="GO" id="GO:0033644">
    <property type="term" value="C:host cell membrane"/>
    <property type="evidence" value="ECO:0007669"/>
    <property type="project" value="UniProtKB-SubCell"/>
</dbReference>
<dbReference type="GO" id="GO:0016020">
    <property type="term" value="C:membrane"/>
    <property type="evidence" value="ECO:0007669"/>
    <property type="project" value="UniProtKB-KW"/>
</dbReference>
<proteinExistence type="predicted"/>
<comment type="subcellular location">
    <subcellularLocation>
        <location evidence="2">Host membrane</location>
        <topology evidence="2">Multi-pass membrane protein</topology>
    </subcellularLocation>
</comment>
<feature type="chain" id="PRO_0000065799" description="Uncharacterized protein ORF6">
    <location>
        <begin position="1"/>
        <end position="113"/>
    </location>
</feature>
<feature type="transmembrane region" description="Helical" evidence="1">
    <location>
        <begin position="25"/>
        <end position="45"/>
    </location>
</feature>
<feature type="transmembrane region" description="Helical" evidence="1">
    <location>
        <begin position="49"/>
        <end position="69"/>
    </location>
</feature>
<organismHost>
    <name type="scientific">Spiroplasma citri</name>
    <dbReference type="NCBI Taxonomy" id="2133"/>
</organismHost>
<protein>
    <recommendedName>
        <fullName>Uncharacterized protein ORF6</fullName>
    </recommendedName>
    <alternativeName>
        <fullName>Gene 6 protein</fullName>
    </alternativeName>
</protein>
<gene>
    <name type="ORF">ORF6</name>
</gene>
<reference key="1">
    <citation type="journal article" date="1990" name="Nucleic Acids Res.">
        <title>Complete nucleotide sequence of the genome of Spiroplasma citri virus SpV1-R8A2 B.</title>
        <authorList>
            <person name="Renaudin J."/>
            <person name="Aullo P."/>
            <person name="Vignault J.C."/>
            <person name="Bove J.M."/>
        </authorList>
    </citation>
    <scope>NUCLEOTIDE SEQUENCE [GENOMIC DNA]</scope>
</reference>
<sequence>MDMKFWTTKEYKKIKRDFIIRNFAFGFCYFLFLISFIMCIVCFIISINFEVEIILVILFPFLLLILSVWNLFDLIMEHISEIKRFKVTVLKKQIEELEGKMLRGLRVGVDKIE</sequence>
<evidence type="ECO:0000255" key="1"/>
<evidence type="ECO:0000305" key="2"/>
<accession>P15897</accession>
<organism>
    <name type="scientific">Spiroplasma virus SpV1-R8A2 B</name>
    <name type="common">SpV1</name>
    <name type="synonym">Spiroplasma virus 1</name>
    <dbReference type="NCBI Taxonomy" id="10854"/>
    <lineage>
        <taxon>Viruses</taxon>
        <taxon>Monodnaviria</taxon>
        <taxon>Loebvirae</taxon>
        <taxon>Hofneiviricota</taxon>
        <taxon>Faserviricetes</taxon>
        <taxon>Tubulavirales</taxon>
        <taxon>Plectroviridae</taxon>
        <taxon>Vespertiliovirus</taxon>
        <taxon>Vespertiliovirus R8A2B</taxon>
    </lineage>
</organism>
<name>ORF6_SPV1R</name>
<keyword id="KW-1043">Host membrane</keyword>
<keyword id="KW-0472">Membrane</keyword>
<keyword id="KW-1185">Reference proteome</keyword>
<keyword id="KW-0812">Transmembrane</keyword>
<keyword id="KW-1133">Transmembrane helix</keyword>